<evidence type="ECO:0000255" key="1">
    <source>
        <dbReference type="HAMAP-Rule" id="MF_00148"/>
    </source>
</evidence>
<evidence type="ECO:0000305" key="2"/>
<organism>
    <name type="scientific">Agrobacterium fabrum (strain C58 / ATCC 33970)</name>
    <name type="common">Agrobacterium tumefaciens (strain C58)</name>
    <dbReference type="NCBI Taxonomy" id="176299"/>
    <lineage>
        <taxon>Bacteria</taxon>
        <taxon>Pseudomonadati</taxon>
        <taxon>Pseudomonadota</taxon>
        <taxon>Alphaproteobacteria</taxon>
        <taxon>Hyphomicrobiales</taxon>
        <taxon>Rhizobiaceae</taxon>
        <taxon>Rhizobium/Agrobacterium group</taxon>
        <taxon>Agrobacterium</taxon>
        <taxon>Agrobacterium tumefaciens complex</taxon>
    </lineage>
</organism>
<sequence>MEAGMAEAGVKLEDSWKHVLSGEFASPYMQKLKEFLLAEKTAGKRIFPKGAEYFRALDLTPLDEVKVVILGQDPYHGLGQAHGLCFSVQPGVRIPPSLVNIYKELQSDLGIRPVKHGFLESWAKQGVLLLNSVLTVEEARAASHQGQGWEKFTDAVIRAVNDECDHVVFLLWGSYAQKKAAFVDQRKHLVLRSPHPSPLSAHNGFFGNGHFSKANAFLVSHGRDPIDWQLPDVVEGDKNLL</sequence>
<name>UNG_AGRFC</name>
<reference key="1">
    <citation type="journal article" date="2001" name="Science">
        <title>The genome of the natural genetic engineer Agrobacterium tumefaciens C58.</title>
        <authorList>
            <person name="Wood D.W."/>
            <person name="Setubal J.C."/>
            <person name="Kaul R."/>
            <person name="Monks D.E."/>
            <person name="Kitajima J.P."/>
            <person name="Okura V.K."/>
            <person name="Zhou Y."/>
            <person name="Chen L."/>
            <person name="Wood G.E."/>
            <person name="Almeida N.F. Jr."/>
            <person name="Woo L."/>
            <person name="Chen Y."/>
            <person name="Paulsen I.T."/>
            <person name="Eisen J.A."/>
            <person name="Karp P.D."/>
            <person name="Bovee D. Sr."/>
            <person name="Chapman P."/>
            <person name="Clendenning J."/>
            <person name="Deatherage G."/>
            <person name="Gillet W."/>
            <person name="Grant C."/>
            <person name="Kutyavin T."/>
            <person name="Levy R."/>
            <person name="Li M.-J."/>
            <person name="McClelland E."/>
            <person name="Palmieri A."/>
            <person name="Raymond C."/>
            <person name="Rouse G."/>
            <person name="Saenphimmachak C."/>
            <person name="Wu Z."/>
            <person name="Romero P."/>
            <person name="Gordon D."/>
            <person name="Zhang S."/>
            <person name="Yoo H."/>
            <person name="Tao Y."/>
            <person name="Biddle P."/>
            <person name="Jung M."/>
            <person name="Krespan W."/>
            <person name="Perry M."/>
            <person name="Gordon-Kamm B."/>
            <person name="Liao L."/>
            <person name="Kim S."/>
            <person name="Hendrick C."/>
            <person name="Zhao Z.-Y."/>
            <person name="Dolan M."/>
            <person name="Chumley F."/>
            <person name="Tingey S.V."/>
            <person name="Tomb J.-F."/>
            <person name="Gordon M.P."/>
            <person name="Olson M.V."/>
            <person name="Nester E.W."/>
        </authorList>
    </citation>
    <scope>NUCLEOTIDE SEQUENCE [LARGE SCALE GENOMIC DNA]</scope>
    <source>
        <strain>C58 / ATCC 33970</strain>
    </source>
</reference>
<reference key="2">
    <citation type="journal article" date="2001" name="Science">
        <title>Genome sequence of the plant pathogen and biotechnology agent Agrobacterium tumefaciens C58.</title>
        <authorList>
            <person name="Goodner B."/>
            <person name="Hinkle G."/>
            <person name="Gattung S."/>
            <person name="Miller N."/>
            <person name="Blanchard M."/>
            <person name="Qurollo B."/>
            <person name="Goldman B.S."/>
            <person name="Cao Y."/>
            <person name="Askenazi M."/>
            <person name="Halling C."/>
            <person name="Mullin L."/>
            <person name="Houmiel K."/>
            <person name="Gordon J."/>
            <person name="Vaudin M."/>
            <person name="Iartchouk O."/>
            <person name="Epp A."/>
            <person name="Liu F."/>
            <person name="Wollam C."/>
            <person name="Allinger M."/>
            <person name="Doughty D."/>
            <person name="Scott C."/>
            <person name="Lappas C."/>
            <person name="Markelz B."/>
            <person name="Flanagan C."/>
            <person name="Crowell C."/>
            <person name="Gurson J."/>
            <person name="Lomo C."/>
            <person name="Sear C."/>
            <person name="Strub G."/>
            <person name="Cielo C."/>
            <person name="Slater S."/>
        </authorList>
    </citation>
    <scope>NUCLEOTIDE SEQUENCE [LARGE SCALE GENOMIC DNA]</scope>
    <source>
        <strain>C58 / ATCC 33970</strain>
    </source>
</reference>
<proteinExistence type="inferred from homology"/>
<comment type="function">
    <text evidence="1">Excises uracil residues from the DNA which can arise as a result of misincorporation of dUMP residues by DNA polymerase or due to deamination of cytosine.</text>
</comment>
<comment type="catalytic activity">
    <reaction evidence="1">
        <text>Hydrolyzes single-stranded DNA or mismatched double-stranded DNA and polynucleotides, releasing free uracil.</text>
        <dbReference type="EC" id="3.2.2.27"/>
    </reaction>
</comment>
<comment type="subcellular location">
    <subcellularLocation>
        <location evidence="1">Cytoplasm</location>
    </subcellularLocation>
</comment>
<comment type="similarity">
    <text evidence="1">Belongs to the uracil-DNA glycosylase (UDG) superfamily. UNG family.</text>
</comment>
<comment type="sequence caution" evidence="2">
    <conflict type="erroneous initiation">
        <sequence resource="EMBL-CDS" id="AAK88192"/>
    </conflict>
</comment>
<keyword id="KW-0963">Cytoplasm</keyword>
<keyword id="KW-0227">DNA damage</keyword>
<keyword id="KW-0234">DNA repair</keyword>
<keyword id="KW-0378">Hydrolase</keyword>
<keyword id="KW-1185">Reference proteome</keyword>
<dbReference type="EC" id="3.2.2.27" evidence="1"/>
<dbReference type="EMBL" id="AE007869">
    <property type="protein sequence ID" value="AAK88192.2"/>
    <property type="status" value="ALT_INIT"/>
    <property type="molecule type" value="Genomic_DNA"/>
</dbReference>
<dbReference type="PIR" id="AE2878">
    <property type="entry name" value="AE2878"/>
</dbReference>
<dbReference type="PIR" id="G97654">
    <property type="entry name" value="G97654"/>
</dbReference>
<dbReference type="RefSeq" id="NP_355407.2">
    <property type="nucleotide sequence ID" value="NC_003062.2"/>
</dbReference>
<dbReference type="RefSeq" id="WP_010972337.1">
    <property type="nucleotide sequence ID" value="NC_003062.2"/>
</dbReference>
<dbReference type="SMR" id="Q8UCM8"/>
<dbReference type="STRING" id="176299.Atu2455"/>
<dbReference type="EnsemblBacteria" id="AAK88192">
    <property type="protein sequence ID" value="AAK88192"/>
    <property type="gene ID" value="Atu2455"/>
</dbReference>
<dbReference type="GeneID" id="1134493"/>
<dbReference type="KEGG" id="atu:Atu2455"/>
<dbReference type="PATRIC" id="fig|176299.10.peg.2467"/>
<dbReference type="eggNOG" id="COG0692">
    <property type="taxonomic scope" value="Bacteria"/>
</dbReference>
<dbReference type="HOGENOM" id="CLU_032162_3_1_5"/>
<dbReference type="OrthoDB" id="9804372at2"/>
<dbReference type="Proteomes" id="UP000000813">
    <property type="component" value="Chromosome circular"/>
</dbReference>
<dbReference type="GO" id="GO:0005737">
    <property type="term" value="C:cytoplasm"/>
    <property type="evidence" value="ECO:0007669"/>
    <property type="project" value="UniProtKB-SubCell"/>
</dbReference>
<dbReference type="GO" id="GO:0004844">
    <property type="term" value="F:uracil DNA N-glycosylase activity"/>
    <property type="evidence" value="ECO:0007669"/>
    <property type="project" value="UniProtKB-UniRule"/>
</dbReference>
<dbReference type="GO" id="GO:0097510">
    <property type="term" value="P:base-excision repair, AP site formation via deaminated base removal"/>
    <property type="evidence" value="ECO:0007669"/>
    <property type="project" value="TreeGrafter"/>
</dbReference>
<dbReference type="CDD" id="cd10027">
    <property type="entry name" value="UDG-F1-like"/>
    <property type="match status" value="1"/>
</dbReference>
<dbReference type="FunFam" id="3.40.470.10:FF:000001">
    <property type="entry name" value="Uracil-DNA glycosylase"/>
    <property type="match status" value="1"/>
</dbReference>
<dbReference type="Gene3D" id="3.40.470.10">
    <property type="entry name" value="Uracil-DNA glycosylase-like domain"/>
    <property type="match status" value="1"/>
</dbReference>
<dbReference type="HAMAP" id="MF_00148">
    <property type="entry name" value="UDG"/>
    <property type="match status" value="1"/>
</dbReference>
<dbReference type="InterPro" id="IPR002043">
    <property type="entry name" value="UDG_fam1"/>
</dbReference>
<dbReference type="InterPro" id="IPR018085">
    <property type="entry name" value="Ura-DNA_Glyclase_AS"/>
</dbReference>
<dbReference type="InterPro" id="IPR005122">
    <property type="entry name" value="Uracil-DNA_glycosylase-like"/>
</dbReference>
<dbReference type="InterPro" id="IPR036895">
    <property type="entry name" value="Uracil-DNA_glycosylase-like_sf"/>
</dbReference>
<dbReference type="NCBIfam" id="NF003588">
    <property type="entry name" value="PRK05254.1-1"/>
    <property type="match status" value="1"/>
</dbReference>
<dbReference type="NCBIfam" id="NF003589">
    <property type="entry name" value="PRK05254.1-2"/>
    <property type="match status" value="1"/>
</dbReference>
<dbReference type="NCBIfam" id="NF003591">
    <property type="entry name" value="PRK05254.1-4"/>
    <property type="match status" value="1"/>
</dbReference>
<dbReference type="NCBIfam" id="NF003592">
    <property type="entry name" value="PRK05254.1-5"/>
    <property type="match status" value="1"/>
</dbReference>
<dbReference type="NCBIfam" id="TIGR00628">
    <property type="entry name" value="ung"/>
    <property type="match status" value="1"/>
</dbReference>
<dbReference type="PANTHER" id="PTHR11264">
    <property type="entry name" value="URACIL-DNA GLYCOSYLASE"/>
    <property type="match status" value="1"/>
</dbReference>
<dbReference type="PANTHER" id="PTHR11264:SF0">
    <property type="entry name" value="URACIL-DNA GLYCOSYLASE"/>
    <property type="match status" value="1"/>
</dbReference>
<dbReference type="Pfam" id="PF03167">
    <property type="entry name" value="UDG"/>
    <property type="match status" value="1"/>
</dbReference>
<dbReference type="SMART" id="SM00986">
    <property type="entry name" value="UDG"/>
    <property type="match status" value="1"/>
</dbReference>
<dbReference type="SMART" id="SM00987">
    <property type="entry name" value="UreE_C"/>
    <property type="match status" value="1"/>
</dbReference>
<dbReference type="SUPFAM" id="SSF52141">
    <property type="entry name" value="Uracil-DNA glycosylase-like"/>
    <property type="match status" value="1"/>
</dbReference>
<dbReference type="PROSITE" id="PS00130">
    <property type="entry name" value="U_DNA_GLYCOSYLASE"/>
    <property type="match status" value="1"/>
</dbReference>
<protein>
    <recommendedName>
        <fullName evidence="1">Uracil-DNA glycosylase</fullName>
        <shortName evidence="1">UDG</shortName>
        <ecNumber evidence="1">3.2.2.27</ecNumber>
    </recommendedName>
</protein>
<feature type="chain" id="PRO_0000176055" description="Uracil-DNA glycosylase">
    <location>
        <begin position="1"/>
        <end position="241"/>
    </location>
</feature>
<feature type="active site" description="Proton acceptor" evidence="1">
    <location>
        <position position="73"/>
    </location>
</feature>
<accession>Q8UCM8</accession>
<gene>
    <name evidence="1" type="primary">ung</name>
    <name type="ordered locus">Atu2455</name>
    <name type="ORF">AGR_C_4459</name>
</gene>